<dbReference type="EC" id="1.15.1.1"/>
<dbReference type="EMBL" id="L22092">
    <property type="protein sequence ID" value="AAA30655.1"/>
    <property type="status" value="ALT_INIT"/>
    <property type="molecule type" value="mRNA"/>
</dbReference>
<dbReference type="EMBL" id="L22093">
    <property type="protein sequence ID" value="AAA30656.1"/>
    <property type="molecule type" value="Genomic_DNA"/>
</dbReference>
<dbReference type="EMBL" id="S67818">
    <property type="protein sequence ID" value="AAC60522.2"/>
    <property type="molecule type" value="mRNA"/>
</dbReference>
<dbReference type="EMBL" id="S67819">
    <property type="protein sequence ID" value="AAD14001.1"/>
    <property type="molecule type" value="Genomic_DNA"/>
</dbReference>
<dbReference type="EMBL" id="BT020988">
    <property type="protein sequence ID" value="AAX09005.1"/>
    <property type="molecule type" value="mRNA"/>
</dbReference>
<dbReference type="EMBL" id="BC105378">
    <property type="protein sequence ID" value="AAI05379.1"/>
    <property type="molecule type" value="mRNA"/>
</dbReference>
<dbReference type="EMBL" id="AB099036">
    <property type="protein sequence ID" value="BAC56526.1"/>
    <property type="molecule type" value="mRNA"/>
</dbReference>
<dbReference type="PIR" id="I51918">
    <property type="entry name" value="I51918"/>
</dbReference>
<dbReference type="RefSeq" id="NP_963285.2">
    <property type="nucleotide sequence ID" value="NM_201527.2"/>
</dbReference>
<dbReference type="RefSeq" id="XP_010807032.1">
    <property type="nucleotide sequence ID" value="XM_010808730.1"/>
</dbReference>
<dbReference type="SMR" id="P41976"/>
<dbReference type="BioGRID" id="158821">
    <property type="interactions" value="2"/>
</dbReference>
<dbReference type="FunCoup" id="P41976">
    <property type="interactions" value="1442"/>
</dbReference>
<dbReference type="STRING" id="9913.ENSBTAP00000008569"/>
<dbReference type="PaxDb" id="9913-ENSBTAP00000008569"/>
<dbReference type="PeptideAtlas" id="P41976"/>
<dbReference type="GeneID" id="281496"/>
<dbReference type="KEGG" id="bta:281496"/>
<dbReference type="CTD" id="6648"/>
<dbReference type="eggNOG" id="KOG0876">
    <property type="taxonomic scope" value="Eukaryota"/>
</dbReference>
<dbReference type="HOGENOM" id="CLU_031625_2_3_1"/>
<dbReference type="InParanoid" id="P41976"/>
<dbReference type="OrthoDB" id="239262at2759"/>
<dbReference type="Proteomes" id="UP000009136">
    <property type="component" value="Unplaced"/>
</dbReference>
<dbReference type="GO" id="GO:0005759">
    <property type="term" value="C:mitochondrial matrix"/>
    <property type="evidence" value="ECO:0007669"/>
    <property type="project" value="UniProtKB-SubCell"/>
</dbReference>
<dbReference type="GO" id="GO:0005739">
    <property type="term" value="C:mitochondrion"/>
    <property type="evidence" value="ECO:0000318"/>
    <property type="project" value="GO_Central"/>
</dbReference>
<dbReference type="GO" id="GO:0030145">
    <property type="term" value="F:manganese ion binding"/>
    <property type="evidence" value="ECO:0000250"/>
    <property type="project" value="UniProtKB"/>
</dbReference>
<dbReference type="GO" id="GO:0004784">
    <property type="term" value="F:superoxide dismutase activity"/>
    <property type="evidence" value="ECO:0000250"/>
    <property type="project" value="UniProtKB"/>
</dbReference>
<dbReference type="GO" id="GO:0034599">
    <property type="term" value="P:cellular response to oxidative stress"/>
    <property type="evidence" value="ECO:0000250"/>
    <property type="project" value="UniProtKB"/>
</dbReference>
<dbReference type="GO" id="GO:0006357">
    <property type="term" value="P:regulation of transcription by RNA polymerase II"/>
    <property type="evidence" value="ECO:0000250"/>
    <property type="project" value="UniProtKB"/>
</dbReference>
<dbReference type="GO" id="GO:0006801">
    <property type="term" value="P:superoxide metabolic process"/>
    <property type="evidence" value="ECO:0000250"/>
    <property type="project" value="UniProtKB"/>
</dbReference>
<dbReference type="FunFam" id="1.10.287.990:FF:000001">
    <property type="entry name" value="Superoxide dismutase"/>
    <property type="match status" value="1"/>
</dbReference>
<dbReference type="FunFam" id="3.55.40.20:FF:000003">
    <property type="entry name" value="Superoxide dismutase [Mn], mitochondrial"/>
    <property type="match status" value="1"/>
</dbReference>
<dbReference type="Gene3D" id="1.10.287.990">
    <property type="entry name" value="Fe,Mn superoxide dismutase (SOD) domain"/>
    <property type="match status" value="1"/>
</dbReference>
<dbReference type="Gene3D" id="3.55.40.20">
    <property type="entry name" value="Iron/manganese superoxide dismutase, C-terminal domain"/>
    <property type="match status" value="1"/>
</dbReference>
<dbReference type="InterPro" id="IPR050265">
    <property type="entry name" value="Fe/Mn_Superoxide_Dismutase"/>
</dbReference>
<dbReference type="InterPro" id="IPR001189">
    <property type="entry name" value="Mn/Fe_SOD"/>
</dbReference>
<dbReference type="InterPro" id="IPR019833">
    <property type="entry name" value="Mn/Fe_SOD_BS"/>
</dbReference>
<dbReference type="InterPro" id="IPR019832">
    <property type="entry name" value="Mn/Fe_SOD_C"/>
</dbReference>
<dbReference type="InterPro" id="IPR019831">
    <property type="entry name" value="Mn/Fe_SOD_N"/>
</dbReference>
<dbReference type="InterPro" id="IPR036324">
    <property type="entry name" value="Mn/Fe_SOD_N_sf"/>
</dbReference>
<dbReference type="InterPro" id="IPR036314">
    <property type="entry name" value="SOD_C_sf"/>
</dbReference>
<dbReference type="PANTHER" id="PTHR11404">
    <property type="entry name" value="SUPEROXIDE DISMUTASE 2"/>
    <property type="match status" value="1"/>
</dbReference>
<dbReference type="PANTHER" id="PTHR11404:SF6">
    <property type="entry name" value="SUPEROXIDE DISMUTASE [MN], MITOCHONDRIAL"/>
    <property type="match status" value="1"/>
</dbReference>
<dbReference type="Pfam" id="PF02777">
    <property type="entry name" value="Sod_Fe_C"/>
    <property type="match status" value="1"/>
</dbReference>
<dbReference type="Pfam" id="PF00081">
    <property type="entry name" value="Sod_Fe_N"/>
    <property type="match status" value="1"/>
</dbReference>
<dbReference type="PIRSF" id="PIRSF000349">
    <property type="entry name" value="SODismutase"/>
    <property type="match status" value="1"/>
</dbReference>
<dbReference type="PRINTS" id="PR01703">
    <property type="entry name" value="MNSODISMTASE"/>
</dbReference>
<dbReference type="SUPFAM" id="SSF54719">
    <property type="entry name" value="Fe,Mn superoxide dismutase (SOD), C-terminal domain"/>
    <property type="match status" value="1"/>
</dbReference>
<dbReference type="SUPFAM" id="SSF46609">
    <property type="entry name" value="Fe,Mn superoxide dismutase (SOD), N-terminal domain"/>
    <property type="match status" value="1"/>
</dbReference>
<dbReference type="PROSITE" id="PS00088">
    <property type="entry name" value="SOD_MN"/>
    <property type="match status" value="1"/>
</dbReference>
<protein>
    <recommendedName>
        <fullName>Superoxide dismutase [Mn], mitochondrial</fullName>
        <ecNumber>1.15.1.1</ecNumber>
    </recommendedName>
</protein>
<gene>
    <name type="primary">SOD2</name>
</gene>
<evidence type="ECO:0000250" key="1"/>
<evidence type="ECO:0000250" key="2">
    <source>
        <dbReference type="UniProtKB" id="P04179"/>
    </source>
</evidence>
<evidence type="ECO:0000250" key="3">
    <source>
        <dbReference type="UniProtKB" id="P07895"/>
    </source>
</evidence>
<evidence type="ECO:0000250" key="4">
    <source>
        <dbReference type="UniProtKB" id="P09671"/>
    </source>
</evidence>
<evidence type="ECO:0000305" key="5"/>
<accession>P41976</accession>
<accession>Q2KJE8</accession>
<accession>Q5E9D2</accession>
<accession>Q862F8</accession>
<proteinExistence type="evidence at transcript level"/>
<sequence length="222" mass="24638">MLSRAACSTSRRLVPALSVLGSRQKHSLPDLPYDYGALEPHINAQIMQLHHSKHHAAYVNNLNVAEEKYREALEKGDVTAQIALQPALKFNGGGHINHSIFWTNLSPNGGGEPQGELLEAIKRDFGSFAKFKEKLTAVSVGVQGSGWGWLGFNKEQGRLQIAACSNQDPLQGTTGLIPLLGIDVWEHAYYLQYKNVRPDYLKAIWNVINWENVTARYTACSK</sequence>
<comment type="function">
    <text evidence="3">Destroys superoxide anion radicals which are normally produced within the cells and which are toxic to biological systems.</text>
</comment>
<comment type="catalytic activity">
    <reaction>
        <text>2 superoxide + 2 H(+) = H2O2 + O2</text>
        <dbReference type="Rhea" id="RHEA:20696"/>
        <dbReference type="ChEBI" id="CHEBI:15378"/>
        <dbReference type="ChEBI" id="CHEBI:15379"/>
        <dbReference type="ChEBI" id="CHEBI:16240"/>
        <dbReference type="ChEBI" id="CHEBI:18421"/>
        <dbReference type="EC" id="1.15.1.1"/>
    </reaction>
</comment>
<comment type="cofactor">
    <cofactor evidence="2">
        <name>Mn(2+)</name>
        <dbReference type="ChEBI" id="CHEBI:29035"/>
    </cofactor>
    <text evidence="2">Binds 1 Mn(2+) ion per subunit.</text>
</comment>
<comment type="subunit">
    <text evidence="1">Homotetramer.</text>
</comment>
<comment type="subcellular location">
    <subcellularLocation>
        <location>Mitochondrion matrix</location>
    </subcellularLocation>
</comment>
<comment type="PTM">
    <text evidence="3">Nitrated under oxidative stress. Nitration coupled with oxidation inhibits the catalytic activity.</text>
</comment>
<comment type="PTM">
    <text evidence="2">Acetylation at Lys-122 decreases enzymatic activity. Deacetylated by SIRT3 upon exposure to ionizing radiations or after long fasting (By similarity).</text>
</comment>
<comment type="PTM">
    <text evidence="2">Polyubiquitinated; leading to proteasomal degradation. Deubiquitinated by USP36 which increases protein stability.</text>
</comment>
<comment type="similarity">
    <text evidence="5">Belongs to the iron/manganese superoxide dismutase family.</text>
</comment>
<comment type="sequence caution" evidence="5">
    <conflict type="erroneous initiation">
        <sequence resource="EMBL-CDS" id="AAA30655"/>
    </conflict>
    <text>Extended N-terminus.</text>
</comment>
<reference key="1">
    <citation type="journal article" date="1994" name="Am. J. Respir. Cell Mol. Biol.">
        <title>Identification and functional characterization of the bovine manganous superoxide dismutase promoter.</title>
        <authorList>
            <person name="Meyrick B."/>
            <person name="Magnuson M.A."/>
        </authorList>
    </citation>
    <scope>NUCLEOTIDE SEQUENCE [GENOMIC DNA / MRNA]</scope>
    <source>
        <tissue>Lung</tissue>
    </source>
</reference>
<reference key="2">
    <citation type="journal article" date="2005" name="BMC Genomics">
        <title>Characterization of 954 bovine full-CDS cDNA sequences.</title>
        <authorList>
            <person name="Harhay G.P."/>
            <person name="Sonstegard T.S."/>
            <person name="Keele J.W."/>
            <person name="Heaton M.P."/>
            <person name="Clawson M.L."/>
            <person name="Snelling W.M."/>
            <person name="Wiedmann R.T."/>
            <person name="Van Tassell C.P."/>
            <person name="Smith T.P.L."/>
        </authorList>
    </citation>
    <scope>NUCLEOTIDE SEQUENCE [LARGE SCALE MRNA]</scope>
</reference>
<reference key="3">
    <citation type="submission" date="2005-09" db="EMBL/GenBank/DDBJ databases">
        <authorList>
            <consortium name="NIH - Mammalian Gene Collection (MGC) project"/>
        </authorList>
    </citation>
    <scope>NUCLEOTIDE SEQUENCE [LARGE SCALE MRNA]</scope>
    <source>
        <strain>Crossbred X Angus</strain>
        <tissue>Ileum</tissue>
    </source>
</reference>
<reference key="4">
    <citation type="journal article" date="2003" name="Mol. Reprod. Dev.">
        <title>Characterization of gene expression profiles in early bovine pregnancy using a custom cDNA microarray.</title>
        <authorList>
            <person name="Ishiwata H."/>
            <person name="Katsuma S."/>
            <person name="Kizaki K."/>
            <person name="Patel O.V."/>
            <person name="Nakano H."/>
            <person name="Takahashi T."/>
            <person name="Imai K."/>
            <person name="Hirasawa A."/>
            <person name="Shiojima S."/>
            <person name="Ikawa H."/>
            <person name="Suzuki Y."/>
            <person name="Tsujimoto G."/>
            <person name="Izaike Y."/>
            <person name="Todoroki J."/>
            <person name="Hashizume K."/>
        </authorList>
    </citation>
    <scope>NUCLEOTIDE SEQUENCE [MRNA] OF 93-201</scope>
</reference>
<feature type="transit peptide" description="Mitochondrion" evidence="1">
    <location>
        <begin position="1"/>
        <end position="24"/>
    </location>
</feature>
<feature type="chain" id="PRO_0000032866" description="Superoxide dismutase [Mn], mitochondrial">
    <location>
        <begin position="25"/>
        <end position="222"/>
    </location>
</feature>
<feature type="binding site" evidence="1">
    <location>
        <position position="50"/>
    </location>
    <ligand>
        <name>Mn(2+)</name>
        <dbReference type="ChEBI" id="CHEBI:29035"/>
    </ligand>
</feature>
<feature type="binding site" evidence="1">
    <location>
        <position position="98"/>
    </location>
    <ligand>
        <name>Mn(2+)</name>
        <dbReference type="ChEBI" id="CHEBI:29035"/>
    </ligand>
</feature>
<feature type="binding site" evidence="1">
    <location>
        <position position="183"/>
    </location>
    <ligand>
        <name>Mn(2+)</name>
        <dbReference type="ChEBI" id="CHEBI:29035"/>
    </ligand>
</feature>
<feature type="binding site" evidence="1">
    <location>
        <position position="187"/>
    </location>
    <ligand>
        <name>Mn(2+)</name>
        <dbReference type="ChEBI" id="CHEBI:29035"/>
    </ligand>
</feature>
<feature type="modified residue" description="3'-nitrotyrosine" evidence="2">
    <location>
        <position position="58"/>
    </location>
</feature>
<feature type="modified residue" description="N6-acetyllysine; alternate" evidence="2">
    <location>
        <position position="68"/>
    </location>
</feature>
<feature type="modified residue" description="N6-succinyllysine; alternate" evidence="4">
    <location>
        <position position="68"/>
    </location>
</feature>
<feature type="modified residue" description="N6-acetyllysine; alternate" evidence="4">
    <location>
        <position position="75"/>
    </location>
</feature>
<feature type="modified residue" description="N6-succinyllysine; alternate" evidence="4">
    <location>
        <position position="75"/>
    </location>
</feature>
<feature type="modified residue" description="N6-acetyllysine; alternate" evidence="4">
    <location>
        <position position="122"/>
    </location>
</feature>
<feature type="modified residue" description="N6-succinyllysine; alternate" evidence="4">
    <location>
        <position position="122"/>
    </location>
</feature>
<feature type="modified residue" description="N6-acetyllysine; alternate" evidence="2">
    <location>
        <position position="130"/>
    </location>
</feature>
<feature type="modified residue" description="N6-succinyllysine; alternate" evidence="4">
    <location>
        <position position="130"/>
    </location>
</feature>
<feature type="modified residue" description="N6-acetyllysine" evidence="4">
    <location>
        <position position="202"/>
    </location>
</feature>
<feature type="sequence conflict" description="In Ref. 1; AAD14001." evidence="5" ref="1">
    <original>S</original>
    <variation>R</variation>
    <location>
        <position position="8"/>
    </location>
</feature>
<feature type="sequence conflict" description="In Ref. 2; AAX09005." evidence="5" ref="2">
    <original>V</original>
    <variation>A</variation>
    <location>
        <position position="14"/>
    </location>
</feature>
<feature type="sequence conflict" description="In Ref. 1; AAC60522." evidence="5" ref="1">
    <original>F</original>
    <variation>V</variation>
    <location>
        <position position="90"/>
    </location>
</feature>
<feature type="sequence conflict" description="In Ref. 4; BAC56526." evidence="5" ref="4">
    <original>GH</original>
    <variation>AI</variation>
    <location>
        <begin position="94"/>
        <end position="95"/>
    </location>
</feature>
<name>SODM_BOVIN</name>
<organism>
    <name type="scientific">Bos taurus</name>
    <name type="common">Bovine</name>
    <dbReference type="NCBI Taxonomy" id="9913"/>
    <lineage>
        <taxon>Eukaryota</taxon>
        <taxon>Metazoa</taxon>
        <taxon>Chordata</taxon>
        <taxon>Craniata</taxon>
        <taxon>Vertebrata</taxon>
        <taxon>Euteleostomi</taxon>
        <taxon>Mammalia</taxon>
        <taxon>Eutheria</taxon>
        <taxon>Laurasiatheria</taxon>
        <taxon>Artiodactyla</taxon>
        <taxon>Ruminantia</taxon>
        <taxon>Pecora</taxon>
        <taxon>Bovidae</taxon>
        <taxon>Bovinae</taxon>
        <taxon>Bos</taxon>
    </lineage>
</organism>
<keyword id="KW-0007">Acetylation</keyword>
<keyword id="KW-0464">Manganese</keyword>
<keyword id="KW-0479">Metal-binding</keyword>
<keyword id="KW-0496">Mitochondrion</keyword>
<keyword id="KW-0944">Nitration</keyword>
<keyword id="KW-0560">Oxidoreductase</keyword>
<keyword id="KW-1185">Reference proteome</keyword>
<keyword id="KW-0809">Transit peptide</keyword>
<keyword id="KW-0832">Ubl conjugation</keyword>